<accession>Q3SMS3</accession>
<evidence type="ECO:0000255" key="1">
    <source>
        <dbReference type="HAMAP-Rule" id="MF_00182"/>
    </source>
</evidence>
<comment type="function">
    <text evidence="1">Attaches a formyl group to the free amino group of methionyl-tRNA(fMet). The formyl group appears to play a dual role in the initiator identity of N-formylmethionyl-tRNA by promoting its recognition by IF2 and preventing the misappropriation of this tRNA by the elongation apparatus.</text>
</comment>
<comment type="catalytic activity">
    <reaction evidence="1">
        <text>L-methionyl-tRNA(fMet) + (6R)-10-formyltetrahydrofolate = N-formyl-L-methionyl-tRNA(fMet) + (6S)-5,6,7,8-tetrahydrofolate + H(+)</text>
        <dbReference type="Rhea" id="RHEA:24380"/>
        <dbReference type="Rhea" id="RHEA-COMP:9952"/>
        <dbReference type="Rhea" id="RHEA-COMP:9953"/>
        <dbReference type="ChEBI" id="CHEBI:15378"/>
        <dbReference type="ChEBI" id="CHEBI:57453"/>
        <dbReference type="ChEBI" id="CHEBI:78530"/>
        <dbReference type="ChEBI" id="CHEBI:78844"/>
        <dbReference type="ChEBI" id="CHEBI:195366"/>
        <dbReference type="EC" id="2.1.2.9"/>
    </reaction>
</comment>
<comment type="similarity">
    <text evidence="1">Belongs to the Fmt family.</text>
</comment>
<reference key="1">
    <citation type="journal article" date="2006" name="J. Bacteriol.">
        <title>The genome sequence of the obligately chemolithoautotrophic, facultatively anaerobic bacterium Thiobacillus denitrificans.</title>
        <authorList>
            <person name="Beller H.R."/>
            <person name="Chain P.S."/>
            <person name="Letain T.E."/>
            <person name="Chakicherla A."/>
            <person name="Larimer F.W."/>
            <person name="Richardson P.M."/>
            <person name="Coleman M.A."/>
            <person name="Wood A.P."/>
            <person name="Kelly D.P."/>
        </authorList>
    </citation>
    <scope>NUCLEOTIDE SEQUENCE [LARGE SCALE GENOMIC DNA]</scope>
    <source>
        <strain>ATCC 25259 / T1</strain>
    </source>
</reference>
<dbReference type="EC" id="2.1.2.9" evidence="1"/>
<dbReference type="EMBL" id="CP000116">
    <property type="protein sequence ID" value="AAZ95968.1"/>
    <property type="molecule type" value="Genomic_DNA"/>
</dbReference>
<dbReference type="RefSeq" id="WP_011310528.1">
    <property type="nucleotide sequence ID" value="NC_007404.1"/>
</dbReference>
<dbReference type="SMR" id="Q3SMS3"/>
<dbReference type="STRING" id="292415.Tbd_0015"/>
<dbReference type="KEGG" id="tbd:Tbd_0015"/>
<dbReference type="eggNOG" id="COG0223">
    <property type="taxonomic scope" value="Bacteria"/>
</dbReference>
<dbReference type="HOGENOM" id="CLU_033347_1_2_4"/>
<dbReference type="OrthoDB" id="9802815at2"/>
<dbReference type="Proteomes" id="UP000008291">
    <property type="component" value="Chromosome"/>
</dbReference>
<dbReference type="GO" id="GO:0005829">
    <property type="term" value="C:cytosol"/>
    <property type="evidence" value="ECO:0007669"/>
    <property type="project" value="TreeGrafter"/>
</dbReference>
<dbReference type="GO" id="GO:0004479">
    <property type="term" value="F:methionyl-tRNA formyltransferase activity"/>
    <property type="evidence" value="ECO:0007669"/>
    <property type="project" value="UniProtKB-UniRule"/>
</dbReference>
<dbReference type="CDD" id="cd08646">
    <property type="entry name" value="FMT_core_Met-tRNA-FMT_N"/>
    <property type="match status" value="1"/>
</dbReference>
<dbReference type="CDD" id="cd08704">
    <property type="entry name" value="Met_tRNA_FMT_C"/>
    <property type="match status" value="1"/>
</dbReference>
<dbReference type="FunFam" id="3.40.50.12230:FF:000001">
    <property type="entry name" value="Methionyl-tRNA formyltransferase"/>
    <property type="match status" value="1"/>
</dbReference>
<dbReference type="Gene3D" id="3.10.25.10">
    <property type="entry name" value="Formyl transferase, C-terminal domain"/>
    <property type="match status" value="1"/>
</dbReference>
<dbReference type="Gene3D" id="3.40.50.170">
    <property type="entry name" value="Formyl transferase, N-terminal domain"/>
    <property type="match status" value="1"/>
</dbReference>
<dbReference type="HAMAP" id="MF_00182">
    <property type="entry name" value="Formyl_trans"/>
    <property type="match status" value="1"/>
</dbReference>
<dbReference type="InterPro" id="IPR005794">
    <property type="entry name" value="Fmt"/>
</dbReference>
<dbReference type="InterPro" id="IPR005793">
    <property type="entry name" value="Formyl_trans_C"/>
</dbReference>
<dbReference type="InterPro" id="IPR037022">
    <property type="entry name" value="Formyl_trans_C_sf"/>
</dbReference>
<dbReference type="InterPro" id="IPR002376">
    <property type="entry name" value="Formyl_transf_N"/>
</dbReference>
<dbReference type="InterPro" id="IPR036477">
    <property type="entry name" value="Formyl_transf_N_sf"/>
</dbReference>
<dbReference type="InterPro" id="IPR011034">
    <property type="entry name" value="Formyl_transferase-like_C_sf"/>
</dbReference>
<dbReference type="InterPro" id="IPR001555">
    <property type="entry name" value="GART_AS"/>
</dbReference>
<dbReference type="InterPro" id="IPR044135">
    <property type="entry name" value="Met-tRNA-FMT_C"/>
</dbReference>
<dbReference type="InterPro" id="IPR041711">
    <property type="entry name" value="Met-tRNA-FMT_N"/>
</dbReference>
<dbReference type="NCBIfam" id="TIGR00460">
    <property type="entry name" value="fmt"/>
    <property type="match status" value="1"/>
</dbReference>
<dbReference type="PANTHER" id="PTHR11138">
    <property type="entry name" value="METHIONYL-TRNA FORMYLTRANSFERASE"/>
    <property type="match status" value="1"/>
</dbReference>
<dbReference type="PANTHER" id="PTHR11138:SF5">
    <property type="entry name" value="METHIONYL-TRNA FORMYLTRANSFERASE, MITOCHONDRIAL"/>
    <property type="match status" value="1"/>
</dbReference>
<dbReference type="Pfam" id="PF02911">
    <property type="entry name" value="Formyl_trans_C"/>
    <property type="match status" value="1"/>
</dbReference>
<dbReference type="Pfam" id="PF00551">
    <property type="entry name" value="Formyl_trans_N"/>
    <property type="match status" value="1"/>
</dbReference>
<dbReference type="SUPFAM" id="SSF50486">
    <property type="entry name" value="FMT C-terminal domain-like"/>
    <property type="match status" value="1"/>
</dbReference>
<dbReference type="SUPFAM" id="SSF53328">
    <property type="entry name" value="Formyltransferase"/>
    <property type="match status" value="1"/>
</dbReference>
<dbReference type="PROSITE" id="PS00373">
    <property type="entry name" value="GART"/>
    <property type="match status" value="1"/>
</dbReference>
<sequence>MRVIFAGTPPFAAAALEALVAAGHEIVLVLTQPDRPAGRGMKLAASAVKQAALAHGLPVYQPTTLKTPEAQARLADCAADVMVVAAYGLILPQAVLDLPRLGCLNIHASLLPRWRGAAPIQRAILAGDCETGITIMQMAAGLDTGAMLAKTVVPIADADTAATLHDALAVAGAAAIVSALSAYDTLVPQTQDEREASYAAKLSKEEARLDWQQPAEALARAVRAFNPVPGAWTLLAGAPFKILRAEAAPQGEADAPPGTVLRADPAGIVVACGGGALVLHEIQAAGSKRMTAAAFLAGRALSAGTRLGA</sequence>
<protein>
    <recommendedName>
        <fullName evidence="1">Methionyl-tRNA formyltransferase</fullName>
        <ecNumber evidence="1">2.1.2.9</ecNumber>
    </recommendedName>
</protein>
<gene>
    <name evidence="1" type="primary">fmt</name>
    <name type="ordered locus">Tbd_0015</name>
</gene>
<organism>
    <name type="scientific">Thiobacillus denitrificans (strain ATCC 25259 / T1)</name>
    <dbReference type="NCBI Taxonomy" id="292415"/>
    <lineage>
        <taxon>Bacteria</taxon>
        <taxon>Pseudomonadati</taxon>
        <taxon>Pseudomonadota</taxon>
        <taxon>Betaproteobacteria</taxon>
        <taxon>Nitrosomonadales</taxon>
        <taxon>Thiobacillaceae</taxon>
        <taxon>Thiobacillus</taxon>
    </lineage>
</organism>
<proteinExistence type="inferred from homology"/>
<keyword id="KW-0648">Protein biosynthesis</keyword>
<keyword id="KW-1185">Reference proteome</keyword>
<keyword id="KW-0808">Transferase</keyword>
<feature type="chain" id="PRO_1000020198" description="Methionyl-tRNA formyltransferase">
    <location>
        <begin position="1"/>
        <end position="309"/>
    </location>
</feature>
<feature type="binding site" evidence="1">
    <location>
        <begin position="109"/>
        <end position="112"/>
    </location>
    <ligand>
        <name>(6S)-5,6,7,8-tetrahydrofolate</name>
        <dbReference type="ChEBI" id="CHEBI:57453"/>
    </ligand>
</feature>
<name>FMT_THIDA</name>